<name>MSCL_PSYA2</name>
<feature type="chain" id="PRO_0000238022" description="Large-conductance mechanosensitive channel">
    <location>
        <begin position="1"/>
        <end position="145"/>
    </location>
</feature>
<feature type="transmembrane region" description="Helical" evidence="1">
    <location>
        <begin position="10"/>
        <end position="30"/>
    </location>
</feature>
<feature type="transmembrane region" description="Helical" evidence="1">
    <location>
        <begin position="41"/>
        <end position="61"/>
    </location>
</feature>
<feature type="transmembrane region" description="Helical" evidence="1">
    <location>
        <begin position="87"/>
        <end position="107"/>
    </location>
</feature>
<gene>
    <name evidence="1" type="primary">mscL</name>
    <name type="ordered locus">Psyc_0340</name>
</gene>
<comment type="function">
    <text evidence="1">Channel that opens in response to stretch forces in the membrane lipid bilayer. May participate in the regulation of osmotic pressure changes within the cell.</text>
</comment>
<comment type="subunit">
    <text evidence="1">Homopentamer.</text>
</comment>
<comment type="subcellular location">
    <subcellularLocation>
        <location evidence="1">Cell inner membrane</location>
        <topology evidence="1">Multi-pass membrane protein</topology>
    </subcellularLocation>
</comment>
<comment type="similarity">
    <text evidence="1">Belongs to the MscL family.</text>
</comment>
<protein>
    <recommendedName>
        <fullName evidence="1">Large-conductance mechanosensitive channel</fullName>
    </recommendedName>
</protein>
<proteinExistence type="inferred from homology"/>
<dbReference type="EMBL" id="CP000082">
    <property type="protein sequence ID" value="AAZ18209.1"/>
    <property type="molecule type" value="Genomic_DNA"/>
</dbReference>
<dbReference type="RefSeq" id="WP_011279647.1">
    <property type="nucleotide sequence ID" value="NC_007204.1"/>
</dbReference>
<dbReference type="SMR" id="Q4FUU9"/>
<dbReference type="STRING" id="259536.Psyc_0340"/>
<dbReference type="KEGG" id="par:Psyc_0340"/>
<dbReference type="eggNOG" id="COG1970">
    <property type="taxonomic scope" value="Bacteria"/>
</dbReference>
<dbReference type="HOGENOM" id="CLU_095787_0_1_6"/>
<dbReference type="OrthoDB" id="9810350at2"/>
<dbReference type="Proteomes" id="UP000000546">
    <property type="component" value="Chromosome"/>
</dbReference>
<dbReference type="GO" id="GO:0005886">
    <property type="term" value="C:plasma membrane"/>
    <property type="evidence" value="ECO:0007669"/>
    <property type="project" value="UniProtKB-SubCell"/>
</dbReference>
<dbReference type="GO" id="GO:0008381">
    <property type="term" value="F:mechanosensitive monoatomic ion channel activity"/>
    <property type="evidence" value="ECO:0007669"/>
    <property type="project" value="UniProtKB-UniRule"/>
</dbReference>
<dbReference type="Gene3D" id="1.10.1200.120">
    <property type="entry name" value="Large-conductance mechanosensitive channel, MscL, domain 1"/>
    <property type="match status" value="1"/>
</dbReference>
<dbReference type="HAMAP" id="MF_00115">
    <property type="entry name" value="MscL"/>
    <property type="match status" value="1"/>
</dbReference>
<dbReference type="InterPro" id="IPR019823">
    <property type="entry name" value="Mechanosensitive_channel_CS"/>
</dbReference>
<dbReference type="InterPro" id="IPR001185">
    <property type="entry name" value="MS_channel"/>
</dbReference>
<dbReference type="InterPro" id="IPR037673">
    <property type="entry name" value="MSC/AndL"/>
</dbReference>
<dbReference type="InterPro" id="IPR036019">
    <property type="entry name" value="MscL_channel"/>
</dbReference>
<dbReference type="NCBIfam" id="TIGR00220">
    <property type="entry name" value="mscL"/>
    <property type="match status" value="1"/>
</dbReference>
<dbReference type="NCBIfam" id="NF010557">
    <property type="entry name" value="PRK13952.1"/>
    <property type="match status" value="1"/>
</dbReference>
<dbReference type="PANTHER" id="PTHR30266:SF2">
    <property type="entry name" value="LARGE-CONDUCTANCE MECHANOSENSITIVE CHANNEL"/>
    <property type="match status" value="1"/>
</dbReference>
<dbReference type="PANTHER" id="PTHR30266">
    <property type="entry name" value="MECHANOSENSITIVE CHANNEL MSCL"/>
    <property type="match status" value="1"/>
</dbReference>
<dbReference type="Pfam" id="PF01741">
    <property type="entry name" value="MscL"/>
    <property type="match status" value="1"/>
</dbReference>
<dbReference type="PRINTS" id="PR01264">
    <property type="entry name" value="MECHCHANNEL"/>
</dbReference>
<dbReference type="SUPFAM" id="SSF81330">
    <property type="entry name" value="Gated mechanosensitive channel"/>
    <property type="match status" value="1"/>
</dbReference>
<dbReference type="PROSITE" id="PS01327">
    <property type="entry name" value="MSCL"/>
    <property type="match status" value="1"/>
</dbReference>
<keyword id="KW-0997">Cell inner membrane</keyword>
<keyword id="KW-1003">Cell membrane</keyword>
<keyword id="KW-0407">Ion channel</keyword>
<keyword id="KW-0406">Ion transport</keyword>
<keyword id="KW-0472">Membrane</keyword>
<keyword id="KW-1185">Reference proteome</keyword>
<keyword id="KW-0812">Transmembrane</keyword>
<keyword id="KW-1133">Transmembrane helix</keyword>
<keyword id="KW-0813">Transport</keyword>
<sequence>MSMVSEFKKFALKGNVMDLAVGVIIGGAFATITKSLVEDVIMPIVAFIAGGEINFKNMFLILGDTPEGVVMTYDALKAAGVPVLAYGNFITVLINFLILAFIIFMMVKMVNRLRRADEVVEKIAGPSEEVQLLREISAKLGNINK</sequence>
<organism>
    <name type="scientific">Psychrobacter arcticus (strain DSM 17307 / VKM B-2377 / 273-4)</name>
    <dbReference type="NCBI Taxonomy" id="259536"/>
    <lineage>
        <taxon>Bacteria</taxon>
        <taxon>Pseudomonadati</taxon>
        <taxon>Pseudomonadota</taxon>
        <taxon>Gammaproteobacteria</taxon>
        <taxon>Moraxellales</taxon>
        <taxon>Moraxellaceae</taxon>
        <taxon>Psychrobacter</taxon>
    </lineage>
</organism>
<accession>Q4FUU9</accession>
<reference key="1">
    <citation type="journal article" date="2010" name="Appl. Environ. Microbiol.">
        <title>The genome sequence of Psychrobacter arcticus 273-4, a psychroactive Siberian permafrost bacterium, reveals mechanisms for adaptation to low-temperature growth.</title>
        <authorList>
            <person name="Ayala-del-Rio H.L."/>
            <person name="Chain P.S."/>
            <person name="Grzymski J.J."/>
            <person name="Ponder M.A."/>
            <person name="Ivanova N."/>
            <person name="Bergholz P.W."/>
            <person name="Di Bartolo G."/>
            <person name="Hauser L."/>
            <person name="Land M."/>
            <person name="Bakermans C."/>
            <person name="Rodrigues D."/>
            <person name="Klappenbach J."/>
            <person name="Zarka D."/>
            <person name="Larimer F."/>
            <person name="Richardson P."/>
            <person name="Murray A."/>
            <person name="Thomashow M."/>
            <person name="Tiedje J.M."/>
        </authorList>
    </citation>
    <scope>NUCLEOTIDE SEQUENCE [LARGE SCALE GENOMIC DNA]</scope>
    <source>
        <strain>DSM 17307 / VKM B-2377 / 273-4</strain>
    </source>
</reference>
<evidence type="ECO:0000255" key="1">
    <source>
        <dbReference type="HAMAP-Rule" id="MF_00115"/>
    </source>
</evidence>